<organism>
    <name type="scientific">Bauera rubioides</name>
    <name type="common">Dog rose</name>
    <dbReference type="NCBI Taxonomy" id="23051"/>
    <lineage>
        <taxon>Eukaryota</taxon>
        <taxon>Viridiplantae</taxon>
        <taxon>Streptophyta</taxon>
        <taxon>Embryophyta</taxon>
        <taxon>Tracheophyta</taxon>
        <taxon>Spermatophyta</taxon>
        <taxon>Magnoliopsida</taxon>
        <taxon>eudicotyledons</taxon>
        <taxon>Gunneridae</taxon>
        <taxon>Pentapetalae</taxon>
        <taxon>rosids</taxon>
        <taxon>fabids</taxon>
        <taxon>Oxalidales</taxon>
        <taxon>Cunoniaceae</taxon>
        <taxon>Bauera</taxon>
    </lineage>
</organism>
<reference key="1">
    <citation type="journal article" date="1993" name="Ann. Mo. Bot. Gard.">
        <title>Phylogenetic relationships among members of Saxifragaceae sensu lato based on rbcL sequence data.</title>
        <authorList>
            <person name="Morgan D.R."/>
            <person name="Soltis D.E."/>
        </authorList>
        <dbReference type="AGRICOLA" id="IND93053812"/>
    </citation>
    <scope>NUCLEOTIDE SEQUENCE [GENOMIC DNA]</scope>
    <source>
        <tissue>Leaf</tissue>
    </source>
</reference>
<accession>Q31730</accession>
<dbReference type="EC" id="4.1.1.39" evidence="1"/>
<dbReference type="EMBL" id="L11174">
    <property type="protein sequence ID" value="AAA84091.2"/>
    <property type="molecule type" value="Genomic_DNA"/>
</dbReference>
<dbReference type="SMR" id="Q31730"/>
<dbReference type="GO" id="GO:0009507">
    <property type="term" value="C:chloroplast"/>
    <property type="evidence" value="ECO:0007669"/>
    <property type="project" value="UniProtKB-SubCell"/>
</dbReference>
<dbReference type="GO" id="GO:0000287">
    <property type="term" value="F:magnesium ion binding"/>
    <property type="evidence" value="ECO:0007669"/>
    <property type="project" value="InterPro"/>
</dbReference>
<dbReference type="GO" id="GO:0004497">
    <property type="term" value="F:monooxygenase activity"/>
    <property type="evidence" value="ECO:0007669"/>
    <property type="project" value="UniProtKB-KW"/>
</dbReference>
<dbReference type="GO" id="GO:0016984">
    <property type="term" value="F:ribulose-bisphosphate carboxylase activity"/>
    <property type="evidence" value="ECO:0007669"/>
    <property type="project" value="UniProtKB-EC"/>
</dbReference>
<dbReference type="GO" id="GO:0009853">
    <property type="term" value="P:photorespiration"/>
    <property type="evidence" value="ECO:0007669"/>
    <property type="project" value="UniProtKB-KW"/>
</dbReference>
<dbReference type="GO" id="GO:0019253">
    <property type="term" value="P:reductive pentose-phosphate cycle"/>
    <property type="evidence" value="ECO:0007669"/>
    <property type="project" value="UniProtKB-KW"/>
</dbReference>
<dbReference type="CDD" id="cd08212">
    <property type="entry name" value="RuBisCO_large_I"/>
    <property type="match status" value="1"/>
</dbReference>
<dbReference type="FunFam" id="3.20.20.110:FF:000001">
    <property type="entry name" value="Ribulose bisphosphate carboxylase large chain"/>
    <property type="match status" value="1"/>
</dbReference>
<dbReference type="FunFam" id="3.30.70.150:FF:000001">
    <property type="entry name" value="Ribulose bisphosphate carboxylase large chain"/>
    <property type="match status" value="1"/>
</dbReference>
<dbReference type="Gene3D" id="3.20.20.110">
    <property type="entry name" value="Ribulose bisphosphate carboxylase, large subunit, C-terminal domain"/>
    <property type="match status" value="1"/>
</dbReference>
<dbReference type="Gene3D" id="3.30.70.150">
    <property type="entry name" value="RuBisCO large subunit, N-terminal domain"/>
    <property type="match status" value="1"/>
</dbReference>
<dbReference type="HAMAP" id="MF_01338">
    <property type="entry name" value="RuBisCO_L_type1"/>
    <property type="match status" value="1"/>
</dbReference>
<dbReference type="InterPro" id="IPR033966">
    <property type="entry name" value="RuBisCO"/>
</dbReference>
<dbReference type="InterPro" id="IPR020878">
    <property type="entry name" value="RuBisCo_large_chain_AS"/>
</dbReference>
<dbReference type="InterPro" id="IPR000685">
    <property type="entry name" value="RuBisCO_lsu_C"/>
</dbReference>
<dbReference type="InterPro" id="IPR036376">
    <property type="entry name" value="RuBisCO_lsu_C_sf"/>
</dbReference>
<dbReference type="InterPro" id="IPR017443">
    <property type="entry name" value="RuBisCO_lsu_fd_N"/>
</dbReference>
<dbReference type="InterPro" id="IPR036422">
    <property type="entry name" value="RuBisCO_lsu_N_sf"/>
</dbReference>
<dbReference type="InterPro" id="IPR020888">
    <property type="entry name" value="RuBisCO_lsuI"/>
</dbReference>
<dbReference type="NCBIfam" id="NF003252">
    <property type="entry name" value="PRK04208.1"/>
    <property type="match status" value="1"/>
</dbReference>
<dbReference type="PANTHER" id="PTHR42704">
    <property type="entry name" value="RIBULOSE BISPHOSPHATE CARBOXYLASE"/>
    <property type="match status" value="1"/>
</dbReference>
<dbReference type="PANTHER" id="PTHR42704:SF15">
    <property type="entry name" value="RIBULOSE BISPHOSPHATE CARBOXYLASE LARGE CHAIN"/>
    <property type="match status" value="1"/>
</dbReference>
<dbReference type="Pfam" id="PF00016">
    <property type="entry name" value="RuBisCO_large"/>
    <property type="match status" value="1"/>
</dbReference>
<dbReference type="Pfam" id="PF02788">
    <property type="entry name" value="RuBisCO_large_N"/>
    <property type="match status" value="1"/>
</dbReference>
<dbReference type="SFLD" id="SFLDG01052">
    <property type="entry name" value="RuBisCO"/>
    <property type="match status" value="1"/>
</dbReference>
<dbReference type="SFLD" id="SFLDS00014">
    <property type="entry name" value="RuBisCO"/>
    <property type="match status" value="1"/>
</dbReference>
<dbReference type="SFLD" id="SFLDG00301">
    <property type="entry name" value="RuBisCO-like_proteins"/>
    <property type="match status" value="1"/>
</dbReference>
<dbReference type="SUPFAM" id="SSF51649">
    <property type="entry name" value="RuBisCo, C-terminal domain"/>
    <property type="match status" value="1"/>
</dbReference>
<dbReference type="SUPFAM" id="SSF54966">
    <property type="entry name" value="RuBisCO, large subunit, small (N-terminal) domain"/>
    <property type="match status" value="1"/>
</dbReference>
<dbReference type="PROSITE" id="PS00157">
    <property type="entry name" value="RUBISCO_LARGE"/>
    <property type="match status" value="1"/>
</dbReference>
<feature type="chain" id="PRO_0000062371" description="Ribulose bisphosphate carboxylase large chain">
    <location>
        <begin position="1" status="less than"/>
        <end position="465"/>
    </location>
</feature>
<feature type="active site" description="Proton acceptor" evidence="1">
    <location>
        <position position="165"/>
    </location>
</feature>
<feature type="active site" description="Proton acceptor" evidence="1">
    <location>
        <position position="284"/>
    </location>
</feature>
<feature type="binding site" description="in homodimeric partner" evidence="1">
    <location>
        <position position="113"/>
    </location>
    <ligand>
        <name>substrate</name>
    </ligand>
</feature>
<feature type="binding site" evidence="1">
    <location>
        <position position="163"/>
    </location>
    <ligand>
        <name>substrate</name>
    </ligand>
</feature>
<feature type="binding site" evidence="1">
    <location>
        <position position="167"/>
    </location>
    <ligand>
        <name>substrate</name>
    </ligand>
</feature>
<feature type="binding site" description="via carbamate group" evidence="1">
    <location>
        <position position="191"/>
    </location>
    <ligand>
        <name>Mg(2+)</name>
        <dbReference type="ChEBI" id="CHEBI:18420"/>
    </ligand>
</feature>
<feature type="binding site" evidence="1">
    <location>
        <position position="193"/>
    </location>
    <ligand>
        <name>Mg(2+)</name>
        <dbReference type="ChEBI" id="CHEBI:18420"/>
    </ligand>
</feature>
<feature type="binding site" evidence="1">
    <location>
        <position position="194"/>
    </location>
    <ligand>
        <name>Mg(2+)</name>
        <dbReference type="ChEBI" id="CHEBI:18420"/>
    </ligand>
</feature>
<feature type="binding site" evidence="1">
    <location>
        <position position="285"/>
    </location>
    <ligand>
        <name>substrate</name>
    </ligand>
</feature>
<feature type="binding site" evidence="1">
    <location>
        <position position="317"/>
    </location>
    <ligand>
        <name>substrate</name>
    </ligand>
</feature>
<feature type="binding site" evidence="1">
    <location>
        <position position="369"/>
    </location>
    <ligand>
        <name>substrate</name>
    </ligand>
</feature>
<feature type="site" description="Transition state stabilizer" evidence="1">
    <location>
        <position position="324"/>
    </location>
</feature>
<feature type="modified residue" description="N6,N6,N6-trimethyllysine" evidence="1">
    <location>
        <position position="4"/>
    </location>
</feature>
<feature type="modified residue" description="N6-carboxylysine" evidence="1">
    <location>
        <position position="191"/>
    </location>
</feature>
<feature type="disulfide bond" description="Interchain; in linked form" evidence="1">
    <location>
        <position position="237"/>
    </location>
</feature>
<feature type="non-terminal residue">
    <location>
        <position position="1"/>
    </location>
</feature>
<name>RBL_BAURU</name>
<geneLocation type="chloroplast"/>
<sequence length="465" mass="51542">VGFKAGVKDYKLTYYTPNYETKDTDILAAFRVSPQPGVPPEEAGAAVAAESSTGTWTTVWTDGLTSLDRYKGRCYHIEPVAGEENQFIAYVAYPLDLFEEGSVTNMFTSIVGNVFGFKALRALRLEDLRIPPAYVKTFQGPPHGIQVERDKLNKYGRPLLGCTIKPKLGLSAKNYGRAVYECLRGGLDFTKDDENVNSQPFMRWRDRLLFCAEAIYKAQAETGEIKGHYLNATAGTCEEMMKRAVFARELGVPIVMHDYLTGGFTANTTLAHYCRDNGLLLHIHRAMHAVIDRQKNHGIHFRVLAKALRMSGGDHIHAGTVVGKLEGERDITLGFVDLLRDDFIEKDRSRGIYFTQDWVSLPGVIPVASGGIHVWHMPALTEIFGDDSVLQFGGGTLGHPWGNAPGAVANRVALEACVQARNEGRDLAREGNEIIREASKWSPELAAACEVWKEIKFEFPAMDTL</sequence>
<gene>
    <name evidence="1" type="primary">rbcL</name>
</gene>
<comment type="function">
    <text evidence="1">RuBisCO catalyzes two reactions: the carboxylation of D-ribulose 1,5-bisphosphate, the primary event in carbon dioxide fixation, as well as the oxidative fragmentation of the pentose substrate in the photorespiration process. Both reactions occur simultaneously and in competition at the same active site.</text>
</comment>
<comment type="catalytic activity">
    <reaction evidence="1">
        <text>2 (2R)-3-phosphoglycerate + 2 H(+) = D-ribulose 1,5-bisphosphate + CO2 + H2O</text>
        <dbReference type="Rhea" id="RHEA:23124"/>
        <dbReference type="ChEBI" id="CHEBI:15377"/>
        <dbReference type="ChEBI" id="CHEBI:15378"/>
        <dbReference type="ChEBI" id="CHEBI:16526"/>
        <dbReference type="ChEBI" id="CHEBI:57870"/>
        <dbReference type="ChEBI" id="CHEBI:58272"/>
        <dbReference type="EC" id="4.1.1.39"/>
    </reaction>
</comment>
<comment type="catalytic activity">
    <reaction evidence="1">
        <text>D-ribulose 1,5-bisphosphate + O2 = 2-phosphoglycolate + (2R)-3-phosphoglycerate + 2 H(+)</text>
        <dbReference type="Rhea" id="RHEA:36631"/>
        <dbReference type="ChEBI" id="CHEBI:15378"/>
        <dbReference type="ChEBI" id="CHEBI:15379"/>
        <dbReference type="ChEBI" id="CHEBI:57870"/>
        <dbReference type="ChEBI" id="CHEBI:58033"/>
        <dbReference type="ChEBI" id="CHEBI:58272"/>
    </reaction>
</comment>
<comment type="cofactor">
    <cofactor evidence="1">
        <name>Mg(2+)</name>
        <dbReference type="ChEBI" id="CHEBI:18420"/>
    </cofactor>
    <text evidence="1">Binds 1 Mg(2+) ion per subunit.</text>
</comment>
<comment type="subunit">
    <text evidence="1">Heterohexadecamer of 8 large chains and 8 small chains; disulfide-linked. The disulfide link is formed within the large subunit homodimers.</text>
</comment>
<comment type="subcellular location">
    <subcellularLocation>
        <location>Plastid</location>
        <location>Chloroplast</location>
    </subcellularLocation>
</comment>
<comment type="PTM">
    <text evidence="1">The disulfide bond which can form in the large chain dimeric partners within the hexadecamer appears to be associated with oxidative stress and protein turnover.</text>
</comment>
<comment type="miscellaneous">
    <text evidence="1">The basic functional RuBisCO is composed of a large chain homodimer in a 'head-to-tail' conformation. In form I RuBisCO this homodimer is arranged in a barrel-like tetramer with the small subunits forming a tetrameric 'cap' on each end of the 'barrel'.</text>
</comment>
<comment type="similarity">
    <text evidence="1">Belongs to the RuBisCO large chain family. Type I subfamily.</text>
</comment>
<keyword id="KW-0113">Calvin cycle</keyword>
<keyword id="KW-0120">Carbon dioxide fixation</keyword>
<keyword id="KW-0150">Chloroplast</keyword>
<keyword id="KW-1015">Disulfide bond</keyword>
<keyword id="KW-0456">Lyase</keyword>
<keyword id="KW-0460">Magnesium</keyword>
<keyword id="KW-0479">Metal-binding</keyword>
<keyword id="KW-0488">Methylation</keyword>
<keyword id="KW-0503">Monooxygenase</keyword>
<keyword id="KW-0560">Oxidoreductase</keyword>
<keyword id="KW-0601">Photorespiration</keyword>
<keyword id="KW-0602">Photosynthesis</keyword>
<keyword id="KW-0934">Plastid</keyword>
<proteinExistence type="inferred from homology"/>
<protein>
    <recommendedName>
        <fullName evidence="1">Ribulose bisphosphate carboxylase large chain</fullName>
        <shortName evidence="1">RuBisCO large subunit</shortName>
        <ecNumber evidence="1">4.1.1.39</ecNumber>
    </recommendedName>
</protein>
<evidence type="ECO:0000255" key="1">
    <source>
        <dbReference type="HAMAP-Rule" id="MF_01338"/>
    </source>
</evidence>